<sequence>MPAELTFVAPRRTPPPRHLADLDPQERRDAVAELGEKPFRARQLAQHYFGRLEADTARMTDLPAASRERLGEALLPQLLTPVKHVTCDNGMTRKTLWRAFDGVLVESVLMRYPDRVTLCVSSQAGCGMNCPFCATGQAGLTRNLSTAEIVDQVVSSARDLARGTVAGGPGRISNIVFMGMGEPLANYKRVLAAIRRITDPVPDGLGISQRGITVSTVGLVPAIEKLTAERMQVRLAVSLHAPDDELRDELVPVNHRWKVAEVLDAAWRYADTTGRRVSIEYALIRDINDQAWRADLLGRLVAGRLAHVNLIPLNPTPGSKWTASRPEVEREFVRRLRSHGVSVTVRDTRGREIDGACGQLAASGA</sequence>
<reference key="1">
    <citation type="journal article" date="2007" name="J. Bacteriol.">
        <title>Genome sequence and analysis of the soil cellulolytic actinomycete Thermobifida fusca YX.</title>
        <authorList>
            <person name="Lykidis A."/>
            <person name="Mavromatis K."/>
            <person name="Ivanova N."/>
            <person name="Anderson I."/>
            <person name="Land M."/>
            <person name="DiBartolo G."/>
            <person name="Martinez M."/>
            <person name="Lapidus A."/>
            <person name="Lucas S."/>
            <person name="Copeland A."/>
            <person name="Richardson P."/>
            <person name="Wilson D.B."/>
            <person name="Kyrpides N."/>
        </authorList>
    </citation>
    <scope>NUCLEOTIDE SEQUENCE [LARGE SCALE GENOMIC DNA]</scope>
    <source>
        <strain>YX</strain>
    </source>
</reference>
<keyword id="KW-0004">4Fe-4S</keyword>
<keyword id="KW-0963">Cytoplasm</keyword>
<keyword id="KW-1015">Disulfide bond</keyword>
<keyword id="KW-0408">Iron</keyword>
<keyword id="KW-0411">Iron-sulfur</keyword>
<keyword id="KW-0479">Metal-binding</keyword>
<keyword id="KW-0489">Methyltransferase</keyword>
<keyword id="KW-0698">rRNA processing</keyword>
<keyword id="KW-0949">S-adenosyl-L-methionine</keyword>
<keyword id="KW-0808">Transferase</keyword>
<keyword id="KW-0819">tRNA processing</keyword>
<dbReference type="EC" id="2.1.1.192" evidence="1"/>
<dbReference type="EMBL" id="CP000088">
    <property type="protein sequence ID" value="AAZ54721.1"/>
    <property type="molecule type" value="Genomic_DNA"/>
</dbReference>
<dbReference type="RefSeq" id="WP_011291130.1">
    <property type="nucleotide sequence ID" value="NC_007333.1"/>
</dbReference>
<dbReference type="SMR" id="Q47S46"/>
<dbReference type="STRING" id="269800.Tfu_0683"/>
<dbReference type="KEGG" id="tfu:Tfu_0683"/>
<dbReference type="eggNOG" id="COG0820">
    <property type="taxonomic scope" value="Bacteria"/>
</dbReference>
<dbReference type="HOGENOM" id="CLU_029101_0_2_11"/>
<dbReference type="OrthoDB" id="9793973at2"/>
<dbReference type="GO" id="GO:0005737">
    <property type="term" value="C:cytoplasm"/>
    <property type="evidence" value="ECO:0007669"/>
    <property type="project" value="UniProtKB-SubCell"/>
</dbReference>
<dbReference type="GO" id="GO:0051539">
    <property type="term" value="F:4 iron, 4 sulfur cluster binding"/>
    <property type="evidence" value="ECO:0007669"/>
    <property type="project" value="UniProtKB-UniRule"/>
</dbReference>
<dbReference type="GO" id="GO:0046872">
    <property type="term" value="F:metal ion binding"/>
    <property type="evidence" value="ECO:0007669"/>
    <property type="project" value="UniProtKB-KW"/>
</dbReference>
<dbReference type="GO" id="GO:0070040">
    <property type="term" value="F:rRNA (adenine(2503)-C2-)-methyltransferase activity"/>
    <property type="evidence" value="ECO:0007669"/>
    <property type="project" value="UniProtKB-UniRule"/>
</dbReference>
<dbReference type="GO" id="GO:0019843">
    <property type="term" value="F:rRNA binding"/>
    <property type="evidence" value="ECO:0007669"/>
    <property type="project" value="UniProtKB-UniRule"/>
</dbReference>
<dbReference type="GO" id="GO:0002935">
    <property type="term" value="F:tRNA (adenine(37)-C2)-methyltransferase activity"/>
    <property type="evidence" value="ECO:0007669"/>
    <property type="project" value="UniProtKB-UniRule"/>
</dbReference>
<dbReference type="GO" id="GO:0000049">
    <property type="term" value="F:tRNA binding"/>
    <property type="evidence" value="ECO:0007669"/>
    <property type="project" value="UniProtKB-UniRule"/>
</dbReference>
<dbReference type="GO" id="GO:0070475">
    <property type="term" value="P:rRNA base methylation"/>
    <property type="evidence" value="ECO:0007669"/>
    <property type="project" value="UniProtKB-UniRule"/>
</dbReference>
<dbReference type="GO" id="GO:0030488">
    <property type="term" value="P:tRNA methylation"/>
    <property type="evidence" value="ECO:0007669"/>
    <property type="project" value="UniProtKB-UniRule"/>
</dbReference>
<dbReference type="CDD" id="cd01335">
    <property type="entry name" value="Radical_SAM"/>
    <property type="match status" value="1"/>
</dbReference>
<dbReference type="FunFam" id="3.20.20.70:FF:000014">
    <property type="entry name" value="Probable dual-specificity RNA methyltransferase RlmN"/>
    <property type="match status" value="1"/>
</dbReference>
<dbReference type="Gene3D" id="1.10.150.530">
    <property type="match status" value="1"/>
</dbReference>
<dbReference type="Gene3D" id="3.20.20.70">
    <property type="entry name" value="Aldolase class I"/>
    <property type="match status" value="1"/>
</dbReference>
<dbReference type="HAMAP" id="MF_01849">
    <property type="entry name" value="RNA_methyltr_RlmN"/>
    <property type="match status" value="1"/>
</dbReference>
<dbReference type="InterPro" id="IPR013785">
    <property type="entry name" value="Aldolase_TIM"/>
</dbReference>
<dbReference type="InterPro" id="IPR040072">
    <property type="entry name" value="Methyltransferase_A"/>
</dbReference>
<dbReference type="InterPro" id="IPR048641">
    <property type="entry name" value="RlmN_N"/>
</dbReference>
<dbReference type="InterPro" id="IPR027492">
    <property type="entry name" value="RNA_MTrfase_RlmN"/>
</dbReference>
<dbReference type="InterPro" id="IPR004383">
    <property type="entry name" value="rRNA_lsu_MTrfase_RlmN/Cfr"/>
</dbReference>
<dbReference type="InterPro" id="IPR007197">
    <property type="entry name" value="rSAM"/>
</dbReference>
<dbReference type="NCBIfam" id="TIGR00048">
    <property type="entry name" value="rRNA_mod_RlmN"/>
    <property type="match status" value="1"/>
</dbReference>
<dbReference type="PANTHER" id="PTHR30544">
    <property type="entry name" value="23S RRNA METHYLTRANSFERASE"/>
    <property type="match status" value="1"/>
</dbReference>
<dbReference type="PANTHER" id="PTHR30544:SF5">
    <property type="entry name" value="RADICAL SAM CORE DOMAIN-CONTAINING PROTEIN"/>
    <property type="match status" value="1"/>
</dbReference>
<dbReference type="Pfam" id="PF04055">
    <property type="entry name" value="Radical_SAM"/>
    <property type="match status" value="1"/>
</dbReference>
<dbReference type="Pfam" id="PF21016">
    <property type="entry name" value="RlmN_N"/>
    <property type="match status" value="1"/>
</dbReference>
<dbReference type="PIRSF" id="PIRSF006004">
    <property type="entry name" value="CHP00048"/>
    <property type="match status" value="1"/>
</dbReference>
<dbReference type="SFLD" id="SFLDF00275">
    <property type="entry name" value="adenosine_C2_methyltransferase"/>
    <property type="match status" value="1"/>
</dbReference>
<dbReference type="SFLD" id="SFLDG01062">
    <property type="entry name" value="methyltransferase_(Class_A)"/>
    <property type="match status" value="1"/>
</dbReference>
<dbReference type="SUPFAM" id="SSF102114">
    <property type="entry name" value="Radical SAM enzymes"/>
    <property type="match status" value="1"/>
</dbReference>
<dbReference type="PROSITE" id="PS51918">
    <property type="entry name" value="RADICAL_SAM"/>
    <property type="match status" value="1"/>
</dbReference>
<comment type="function">
    <text evidence="1">Specifically methylates position 2 of adenine 2503 in 23S rRNA and position 2 of adenine 37 in tRNAs.</text>
</comment>
<comment type="catalytic activity">
    <reaction evidence="1">
        <text>adenosine(2503) in 23S rRNA + 2 reduced [2Fe-2S]-[ferredoxin] + 2 S-adenosyl-L-methionine = 2-methyladenosine(2503) in 23S rRNA + 5'-deoxyadenosine + L-methionine + 2 oxidized [2Fe-2S]-[ferredoxin] + S-adenosyl-L-homocysteine</text>
        <dbReference type="Rhea" id="RHEA:42916"/>
        <dbReference type="Rhea" id="RHEA-COMP:10000"/>
        <dbReference type="Rhea" id="RHEA-COMP:10001"/>
        <dbReference type="Rhea" id="RHEA-COMP:10152"/>
        <dbReference type="Rhea" id="RHEA-COMP:10282"/>
        <dbReference type="ChEBI" id="CHEBI:17319"/>
        <dbReference type="ChEBI" id="CHEBI:33737"/>
        <dbReference type="ChEBI" id="CHEBI:33738"/>
        <dbReference type="ChEBI" id="CHEBI:57844"/>
        <dbReference type="ChEBI" id="CHEBI:57856"/>
        <dbReference type="ChEBI" id="CHEBI:59789"/>
        <dbReference type="ChEBI" id="CHEBI:74411"/>
        <dbReference type="ChEBI" id="CHEBI:74497"/>
        <dbReference type="EC" id="2.1.1.192"/>
    </reaction>
</comment>
<comment type="catalytic activity">
    <reaction evidence="1">
        <text>adenosine(37) in tRNA + 2 reduced [2Fe-2S]-[ferredoxin] + 2 S-adenosyl-L-methionine = 2-methyladenosine(37) in tRNA + 5'-deoxyadenosine + L-methionine + 2 oxidized [2Fe-2S]-[ferredoxin] + S-adenosyl-L-homocysteine</text>
        <dbReference type="Rhea" id="RHEA:43332"/>
        <dbReference type="Rhea" id="RHEA-COMP:10000"/>
        <dbReference type="Rhea" id="RHEA-COMP:10001"/>
        <dbReference type="Rhea" id="RHEA-COMP:10162"/>
        <dbReference type="Rhea" id="RHEA-COMP:10485"/>
        <dbReference type="ChEBI" id="CHEBI:17319"/>
        <dbReference type="ChEBI" id="CHEBI:33737"/>
        <dbReference type="ChEBI" id="CHEBI:33738"/>
        <dbReference type="ChEBI" id="CHEBI:57844"/>
        <dbReference type="ChEBI" id="CHEBI:57856"/>
        <dbReference type="ChEBI" id="CHEBI:59789"/>
        <dbReference type="ChEBI" id="CHEBI:74411"/>
        <dbReference type="ChEBI" id="CHEBI:74497"/>
        <dbReference type="EC" id="2.1.1.192"/>
    </reaction>
</comment>
<comment type="cofactor">
    <cofactor evidence="1">
        <name>[4Fe-4S] cluster</name>
        <dbReference type="ChEBI" id="CHEBI:49883"/>
    </cofactor>
    <text evidence="1">Binds 1 [4Fe-4S] cluster. The cluster is coordinated with 3 cysteines and an exchangeable S-adenosyl-L-methionine.</text>
</comment>
<comment type="subcellular location">
    <subcellularLocation>
        <location evidence="1">Cytoplasm</location>
    </subcellularLocation>
</comment>
<comment type="miscellaneous">
    <text evidence="1">Reaction proceeds by a ping-pong mechanism involving intermediate methylation of a conserved cysteine residue.</text>
</comment>
<comment type="similarity">
    <text evidence="1">Belongs to the radical SAM superfamily. RlmN family.</text>
</comment>
<gene>
    <name evidence="1" type="primary">rlmN</name>
    <name type="ordered locus">Tfu_0683</name>
</gene>
<protein>
    <recommendedName>
        <fullName evidence="1">Probable dual-specificity RNA methyltransferase RlmN</fullName>
        <ecNumber evidence="1">2.1.1.192</ecNumber>
    </recommendedName>
    <alternativeName>
        <fullName evidence="1">23S rRNA (adenine(2503)-C(2))-methyltransferase</fullName>
    </alternativeName>
    <alternativeName>
        <fullName evidence="1">23S rRNA m2A2503 methyltransferase</fullName>
    </alternativeName>
    <alternativeName>
        <fullName evidence="1">Ribosomal RNA large subunit methyltransferase N</fullName>
    </alternativeName>
    <alternativeName>
        <fullName evidence="1">tRNA (adenine(37)-C(2))-methyltransferase</fullName>
    </alternativeName>
    <alternativeName>
        <fullName evidence="1">tRNA m2A37 methyltransferase</fullName>
    </alternativeName>
</protein>
<organism>
    <name type="scientific">Thermobifida fusca (strain YX)</name>
    <dbReference type="NCBI Taxonomy" id="269800"/>
    <lineage>
        <taxon>Bacteria</taxon>
        <taxon>Bacillati</taxon>
        <taxon>Actinomycetota</taxon>
        <taxon>Actinomycetes</taxon>
        <taxon>Streptosporangiales</taxon>
        <taxon>Nocardiopsidaceae</taxon>
        <taxon>Thermobifida</taxon>
    </lineage>
</organism>
<evidence type="ECO:0000255" key="1">
    <source>
        <dbReference type="HAMAP-Rule" id="MF_01849"/>
    </source>
</evidence>
<evidence type="ECO:0000255" key="2">
    <source>
        <dbReference type="PROSITE-ProRule" id="PRU01266"/>
    </source>
</evidence>
<proteinExistence type="inferred from homology"/>
<feature type="chain" id="PRO_0000350497" description="Probable dual-specificity RNA methyltransferase RlmN">
    <location>
        <begin position="1"/>
        <end position="365"/>
    </location>
</feature>
<feature type="domain" description="Radical SAM core" evidence="2">
    <location>
        <begin position="112"/>
        <end position="352"/>
    </location>
</feature>
<feature type="active site" description="Proton acceptor" evidence="1">
    <location>
        <position position="106"/>
    </location>
</feature>
<feature type="active site" description="S-methylcysteine intermediate" evidence="1">
    <location>
        <position position="357"/>
    </location>
</feature>
<feature type="binding site" evidence="1">
    <location>
        <position position="126"/>
    </location>
    <ligand>
        <name>[4Fe-4S] cluster</name>
        <dbReference type="ChEBI" id="CHEBI:49883"/>
        <note>4Fe-4S-S-AdoMet</note>
    </ligand>
</feature>
<feature type="binding site" evidence="1">
    <location>
        <position position="130"/>
    </location>
    <ligand>
        <name>[4Fe-4S] cluster</name>
        <dbReference type="ChEBI" id="CHEBI:49883"/>
        <note>4Fe-4S-S-AdoMet</note>
    </ligand>
</feature>
<feature type="binding site" evidence="1">
    <location>
        <position position="133"/>
    </location>
    <ligand>
        <name>[4Fe-4S] cluster</name>
        <dbReference type="ChEBI" id="CHEBI:49883"/>
        <note>4Fe-4S-S-AdoMet</note>
    </ligand>
</feature>
<feature type="binding site" evidence="1">
    <location>
        <begin position="181"/>
        <end position="182"/>
    </location>
    <ligand>
        <name>S-adenosyl-L-methionine</name>
        <dbReference type="ChEBI" id="CHEBI:59789"/>
    </ligand>
</feature>
<feature type="binding site" evidence="1">
    <location>
        <position position="215"/>
    </location>
    <ligand>
        <name>S-adenosyl-L-methionine</name>
        <dbReference type="ChEBI" id="CHEBI:59789"/>
    </ligand>
</feature>
<feature type="binding site" evidence="1">
    <location>
        <begin position="238"/>
        <end position="240"/>
    </location>
    <ligand>
        <name>S-adenosyl-L-methionine</name>
        <dbReference type="ChEBI" id="CHEBI:59789"/>
    </ligand>
</feature>
<feature type="binding site" evidence="1">
    <location>
        <position position="314"/>
    </location>
    <ligand>
        <name>S-adenosyl-L-methionine</name>
        <dbReference type="ChEBI" id="CHEBI:59789"/>
    </ligand>
</feature>
<feature type="disulfide bond" description="(transient)" evidence="1">
    <location>
        <begin position="119"/>
        <end position="357"/>
    </location>
</feature>
<accession>Q47S46</accession>
<name>RLMN_THEFY</name>